<gene>
    <name evidence="1" type="primary">lepA</name>
    <name type="ordered locus">LBL_1732</name>
</gene>
<comment type="function">
    <text evidence="1">Required for accurate and efficient protein synthesis under certain stress conditions. May act as a fidelity factor of the translation reaction, by catalyzing a one-codon backward translocation of tRNAs on improperly translocated ribosomes. Back-translocation proceeds from a post-translocation (POST) complex to a pre-translocation (PRE) complex, thus giving elongation factor G a second chance to translocate the tRNAs correctly. Binds to ribosomes in a GTP-dependent manner.</text>
</comment>
<comment type="catalytic activity">
    <reaction evidence="1">
        <text>GTP + H2O = GDP + phosphate + H(+)</text>
        <dbReference type="Rhea" id="RHEA:19669"/>
        <dbReference type="ChEBI" id="CHEBI:15377"/>
        <dbReference type="ChEBI" id="CHEBI:15378"/>
        <dbReference type="ChEBI" id="CHEBI:37565"/>
        <dbReference type="ChEBI" id="CHEBI:43474"/>
        <dbReference type="ChEBI" id="CHEBI:58189"/>
        <dbReference type="EC" id="3.6.5.n1"/>
    </reaction>
</comment>
<comment type="subcellular location">
    <subcellularLocation>
        <location evidence="1">Cell inner membrane</location>
        <topology evidence="1">Peripheral membrane protein</topology>
        <orientation evidence="1">Cytoplasmic side</orientation>
    </subcellularLocation>
</comment>
<comment type="similarity">
    <text evidence="1">Belongs to the TRAFAC class translation factor GTPase superfamily. Classic translation factor GTPase family. LepA subfamily.</text>
</comment>
<protein>
    <recommendedName>
        <fullName evidence="1">Elongation factor 4</fullName>
        <shortName evidence="1">EF-4</shortName>
        <ecNumber evidence="1">3.6.5.n1</ecNumber>
    </recommendedName>
    <alternativeName>
        <fullName evidence="1">Ribosomal back-translocase LepA</fullName>
    </alternativeName>
</protein>
<accession>Q050R3</accession>
<sequence length="601" mass="66917">MSDKQQFIRNFSIIAHIDHGKSTLADRLLEIGQVTNDRTKKDQILDSMDIERERGITIKANNATFDYLADDGNTYTMNLLDTPGHVDFTYEVSRSLKACEGVLLIVDASQGVEAQTLANLYLAMEQDLEILPVMNKIDLPAADVEKTKIQIEESLGLDSEKAVAISAKTGLNVKAVLEAITKEIPAPKGDPKGPLKALIYDSYFDPYMGVVIKIRVFDGSIKKGDRFLIMSTGKDFTVNEVGINRIALTPTDGLGAGEVGYLIAGIKKVSDAKTGDTITLFSNPTKESIPGYKEAKPMVFSGLYPINGEQFDELVDAIEKLKLNDAALIFEKESSVALGFGFRVGYLGLLHMEIVQERLEREFNLDLITTAPSVKYIIRKKSGEVEEIDNPSRFPEPITIESTEEPYVKATVITPNEYVGNIMALAMDKRGIQLDTVYLTQDKVQLTYELPLAELIFEFYDKLKSFTRGYASLDYEPSGYRISQLVKMDILVNGEPVDALSMIVHRTKAEQRGREIIEKLKDLIPRHQFMIPIQAAVGGKILARESISALRKNVTAKCYGGDITRKKKLLEKQKEGKKRMKQIGNVEIPQEAFLAVLKTNN</sequence>
<evidence type="ECO:0000255" key="1">
    <source>
        <dbReference type="HAMAP-Rule" id="MF_00071"/>
    </source>
</evidence>
<keyword id="KW-0997">Cell inner membrane</keyword>
<keyword id="KW-1003">Cell membrane</keyword>
<keyword id="KW-0342">GTP-binding</keyword>
<keyword id="KW-0378">Hydrolase</keyword>
<keyword id="KW-0472">Membrane</keyword>
<keyword id="KW-0547">Nucleotide-binding</keyword>
<keyword id="KW-0648">Protein biosynthesis</keyword>
<organism>
    <name type="scientific">Leptospira borgpetersenii serovar Hardjo-bovis (strain L550)</name>
    <dbReference type="NCBI Taxonomy" id="355276"/>
    <lineage>
        <taxon>Bacteria</taxon>
        <taxon>Pseudomonadati</taxon>
        <taxon>Spirochaetota</taxon>
        <taxon>Spirochaetia</taxon>
        <taxon>Leptospirales</taxon>
        <taxon>Leptospiraceae</taxon>
        <taxon>Leptospira</taxon>
    </lineage>
</organism>
<feature type="chain" id="PRO_1000032016" description="Elongation factor 4">
    <location>
        <begin position="1"/>
        <end position="601"/>
    </location>
</feature>
<feature type="domain" description="tr-type G">
    <location>
        <begin position="6"/>
        <end position="188"/>
    </location>
</feature>
<feature type="binding site" evidence="1">
    <location>
        <begin position="18"/>
        <end position="23"/>
    </location>
    <ligand>
        <name>GTP</name>
        <dbReference type="ChEBI" id="CHEBI:37565"/>
    </ligand>
</feature>
<feature type="binding site" evidence="1">
    <location>
        <begin position="135"/>
        <end position="138"/>
    </location>
    <ligand>
        <name>GTP</name>
        <dbReference type="ChEBI" id="CHEBI:37565"/>
    </ligand>
</feature>
<proteinExistence type="inferred from homology"/>
<reference key="1">
    <citation type="journal article" date="2006" name="Proc. Natl. Acad. Sci. U.S.A.">
        <title>Genome reduction in Leptospira borgpetersenii reflects limited transmission potential.</title>
        <authorList>
            <person name="Bulach D.M."/>
            <person name="Zuerner R.L."/>
            <person name="Wilson P."/>
            <person name="Seemann T."/>
            <person name="McGrath A."/>
            <person name="Cullen P.A."/>
            <person name="Davis J."/>
            <person name="Johnson M."/>
            <person name="Kuczek E."/>
            <person name="Alt D.P."/>
            <person name="Peterson-Burch B."/>
            <person name="Coppel R.L."/>
            <person name="Rood J.I."/>
            <person name="Davies J.K."/>
            <person name="Adler B."/>
        </authorList>
    </citation>
    <scope>NUCLEOTIDE SEQUENCE [LARGE SCALE GENOMIC DNA]</scope>
    <source>
        <strain>L550</strain>
    </source>
</reference>
<name>LEPA_LEPBL</name>
<dbReference type="EC" id="3.6.5.n1" evidence="1"/>
<dbReference type="EMBL" id="CP000348">
    <property type="protein sequence ID" value="ABJ79182.1"/>
    <property type="molecule type" value="Genomic_DNA"/>
</dbReference>
<dbReference type="RefSeq" id="WP_011670305.1">
    <property type="nucleotide sequence ID" value="NC_008508.1"/>
</dbReference>
<dbReference type="SMR" id="Q050R3"/>
<dbReference type="KEGG" id="lbl:LBL_1732"/>
<dbReference type="HOGENOM" id="CLU_009995_3_3_12"/>
<dbReference type="GO" id="GO:0005886">
    <property type="term" value="C:plasma membrane"/>
    <property type="evidence" value="ECO:0007669"/>
    <property type="project" value="UniProtKB-SubCell"/>
</dbReference>
<dbReference type="GO" id="GO:0005525">
    <property type="term" value="F:GTP binding"/>
    <property type="evidence" value="ECO:0007669"/>
    <property type="project" value="UniProtKB-UniRule"/>
</dbReference>
<dbReference type="GO" id="GO:0003924">
    <property type="term" value="F:GTPase activity"/>
    <property type="evidence" value="ECO:0007669"/>
    <property type="project" value="UniProtKB-UniRule"/>
</dbReference>
<dbReference type="GO" id="GO:0043022">
    <property type="term" value="F:ribosome binding"/>
    <property type="evidence" value="ECO:0007669"/>
    <property type="project" value="UniProtKB-UniRule"/>
</dbReference>
<dbReference type="GO" id="GO:0003746">
    <property type="term" value="F:translation elongation factor activity"/>
    <property type="evidence" value="ECO:0007669"/>
    <property type="project" value="UniProtKB-UniRule"/>
</dbReference>
<dbReference type="GO" id="GO:0045727">
    <property type="term" value="P:positive regulation of translation"/>
    <property type="evidence" value="ECO:0007669"/>
    <property type="project" value="UniProtKB-UniRule"/>
</dbReference>
<dbReference type="CDD" id="cd03699">
    <property type="entry name" value="EF4_II"/>
    <property type="match status" value="1"/>
</dbReference>
<dbReference type="CDD" id="cd16260">
    <property type="entry name" value="EF4_III"/>
    <property type="match status" value="1"/>
</dbReference>
<dbReference type="CDD" id="cd01890">
    <property type="entry name" value="LepA"/>
    <property type="match status" value="1"/>
</dbReference>
<dbReference type="CDD" id="cd03709">
    <property type="entry name" value="lepA_C"/>
    <property type="match status" value="1"/>
</dbReference>
<dbReference type="FunFam" id="3.40.50.300:FF:000078">
    <property type="entry name" value="Elongation factor 4"/>
    <property type="match status" value="1"/>
</dbReference>
<dbReference type="FunFam" id="2.40.30.10:FF:000015">
    <property type="entry name" value="Translation factor GUF1, mitochondrial"/>
    <property type="match status" value="1"/>
</dbReference>
<dbReference type="FunFam" id="3.30.70.240:FF:000007">
    <property type="entry name" value="Translation factor GUF1, mitochondrial"/>
    <property type="match status" value="1"/>
</dbReference>
<dbReference type="FunFam" id="3.30.70.2570:FF:000001">
    <property type="entry name" value="Translation factor GUF1, mitochondrial"/>
    <property type="match status" value="1"/>
</dbReference>
<dbReference type="FunFam" id="3.30.70.870:FF:000004">
    <property type="entry name" value="Translation factor GUF1, mitochondrial"/>
    <property type="match status" value="1"/>
</dbReference>
<dbReference type="Gene3D" id="3.30.70.240">
    <property type="match status" value="1"/>
</dbReference>
<dbReference type="Gene3D" id="3.30.70.2570">
    <property type="entry name" value="Elongation factor 4, C-terminal domain"/>
    <property type="match status" value="1"/>
</dbReference>
<dbReference type="Gene3D" id="3.30.70.870">
    <property type="entry name" value="Elongation Factor G (Translational Gtpase), domain 3"/>
    <property type="match status" value="1"/>
</dbReference>
<dbReference type="Gene3D" id="3.40.50.300">
    <property type="entry name" value="P-loop containing nucleotide triphosphate hydrolases"/>
    <property type="match status" value="1"/>
</dbReference>
<dbReference type="Gene3D" id="2.40.30.10">
    <property type="entry name" value="Translation factors"/>
    <property type="match status" value="1"/>
</dbReference>
<dbReference type="HAMAP" id="MF_00071">
    <property type="entry name" value="LepA"/>
    <property type="match status" value="1"/>
</dbReference>
<dbReference type="InterPro" id="IPR006297">
    <property type="entry name" value="EF-4"/>
</dbReference>
<dbReference type="InterPro" id="IPR035647">
    <property type="entry name" value="EFG_III/V"/>
</dbReference>
<dbReference type="InterPro" id="IPR000640">
    <property type="entry name" value="EFG_V-like"/>
</dbReference>
<dbReference type="InterPro" id="IPR004161">
    <property type="entry name" value="EFTu-like_2"/>
</dbReference>
<dbReference type="InterPro" id="IPR031157">
    <property type="entry name" value="G_TR_CS"/>
</dbReference>
<dbReference type="InterPro" id="IPR038363">
    <property type="entry name" value="LepA_C_sf"/>
</dbReference>
<dbReference type="InterPro" id="IPR013842">
    <property type="entry name" value="LepA_CTD"/>
</dbReference>
<dbReference type="InterPro" id="IPR035654">
    <property type="entry name" value="LepA_IV"/>
</dbReference>
<dbReference type="InterPro" id="IPR027417">
    <property type="entry name" value="P-loop_NTPase"/>
</dbReference>
<dbReference type="InterPro" id="IPR005225">
    <property type="entry name" value="Small_GTP-bd"/>
</dbReference>
<dbReference type="InterPro" id="IPR000795">
    <property type="entry name" value="T_Tr_GTP-bd_dom"/>
</dbReference>
<dbReference type="InterPro" id="IPR009000">
    <property type="entry name" value="Transl_B-barrel_sf"/>
</dbReference>
<dbReference type="NCBIfam" id="TIGR01393">
    <property type="entry name" value="lepA"/>
    <property type="match status" value="1"/>
</dbReference>
<dbReference type="NCBIfam" id="TIGR00231">
    <property type="entry name" value="small_GTP"/>
    <property type="match status" value="1"/>
</dbReference>
<dbReference type="PANTHER" id="PTHR43512:SF4">
    <property type="entry name" value="TRANSLATION FACTOR GUF1 HOMOLOG, CHLOROPLASTIC"/>
    <property type="match status" value="1"/>
</dbReference>
<dbReference type="PANTHER" id="PTHR43512">
    <property type="entry name" value="TRANSLATION FACTOR GUF1-RELATED"/>
    <property type="match status" value="1"/>
</dbReference>
<dbReference type="Pfam" id="PF00679">
    <property type="entry name" value="EFG_C"/>
    <property type="match status" value="1"/>
</dbReference>
<dbReference type="Pfam" id="PF00009">
    <property type="entry name" value="GTP_EFTU"/>
    <property type="match status" value="1"/>
</dbReference>
<dbReference type="Pfam" id="PF03144">
    <property type="entry name" value="GTP_EFTU_D2"/>
    <property type="match status" value="1"/>
</dbReference>
<dbReference type="Pfam" id="PF06421">
    <property type="entry name" value="LepA_C"/>
    <property type="match status" value="1"/>
</dbReference>
<dbReference type="PRINTS" id="PR00315">
    <property type="entry name" value="ELONGATNFCT"/>
</dbReference>
<dbReference type="SMART" id="SM00838">
    <property type="entry name" value="EFG_C"/>
    <property type="match status" value="1"/>
</dbReference>
<dbReference type="SUPFAM" id="SSF54980">
    <property type="entry name" value="EF-G C-terminal domain-like"/>
    <property type="match status" value="2"/>
</dbReference>
<dbReference type="SUPFAM" id="SSF52540">
    <property type="entry name" value="P-loop containing nucleoside triphosphate hydrolases"/>
    <property type="match status" value="1"/>
</dbReference>
<dbReference type="SUPFAM" id="SSF50447">
    <property type="entry name" value="Translation proteins"/>
    <property type="match status" value="1"/>
</dbReference>
<dbReference type="PROSITE" id="PS00301">
    <property type="entry name" value="G_TR_1"/>
    <property type="match status" value="1"/>
</dbReference>
<dbReference type="PROSITE" id="PS51722">
    <property type="entry name" value="G_TR_2"/>
    <property type="match status" value="1"/>
</dbReference>